<organism>
    <name type="scientific">Escherichia coli O7:K1 (strain IAI39 / ExPEC)</name>
    <dbReference type="NCBI Taxonomy" id="585057"/>
    <lineage>
        <taxon>Bacteria</taxon>
        <taxon>Pseudomonadati</taxon>
        <taxon>Pseudomonadota</taxon>
        <taxon>Gammaproteobacteria</taxon>
        <taxon>Enterobacterales</taxon>
        <taxon>Enterobacteriaceae</taxon>
        <taxon>Escherichia</taxon>
    </lineage>
</organism>
<comment type="function">
    <text evidence="1">This protein is an aporepressor. When complexed with L-tryptophan it binds the operator region of the trp operon (5'-ACTAGT-'3') and prevents the initiation of transcription. The complex also regulates trp repressor biosynthesis by binding to its regulatory region.</text>
</comment>
<comment type="subunit">
    <text evidence="1">Homodimer.</text>
</comment>
<comment type="subcellular location">
    <subcellularLocation>
        <location evidence="1">Cytoplasm</location>
    </subcellularLocation>
</comment>
<comment type="similarity">
    <text evidence="1">Belongs to the TrpR family.</text>
</comment>
<protein>
    <recommendedName>
        <fullName evidence="1">Trp operon repressor</fullName>
    </recommendedName>
</protein>
<proteinExistence type="inferred from homology"/>
<gene>
    <name evidence="1" type="primary">trpR</name>
    <name type="ordered locus">ECIAI39_4926</name>
</gene>
<sequence length="108" mass="12405">MAQQSPYSAAMAEQRHQEWLRFVDLLKNAYQNDLHLPLLNLMLTPDEREALGTRVRIVEELLRGEMSQRELKNELGAGIATITRGSNSLKAAPVELRQWLEEVLLKDH</sequence>
<dbReference type="EMBL" id="CU928164">
    <property type="protein sequence ID" value="CAR21022.1"/>
    <property type="molecule type" value="Genomic_DNA"/>
</dbReference>
<dbReference type="RefSeq" id="WP_000068678.1">
    <property type="nucleotide sequence ID" value="NC_011750.1"/>
</dbReference>
<dbReference type="RefSeq" id="YP_002410771.1">
    <property type="nucleotide sequence ID" value="NC_011750.1"/>
</dbReference>
<dbReference type="SMR" id="B7NW74"/>
<dbReference type="STRING" id="585057.ECIAI39_4926"/>
<dbReference type="GeneID" id="75058921"/>
<dbReference type="KEGG" id="ect:ECIAI39_4926"/>
<dbReference type="PATRIC" id="fig|585057.6.peg.5089"/>
<dbReference type="HOGENOM" id="CLU_147939_0_0_6"/>
<dbReference type="Proteomes" id="UP000000749">
    <property type="component" value="Chromosome"/>
</dbReference>
<dbReference type="GO" id="GO:0005737">
    <property type="term" value="C:cytoplasm"/>
    <property type="evidence" value="ECO:0007669"/>
    <property type="project" value="UniProtKB-SubCell"/>
</dbReference>
<dbReference type="GO" id="GO:0003700">
    <property type="term" value="F:DNA-binding transcription factor activity"/>
    <property type="evidence" value="ECO:0007669"/>
    <property type="project" value="InterPro"/>
</dbReference>
<dbReference type="GO" id="GO:0043565">
    <property type="term" value="F:sequence-specific DNA binding"/>
    <property type="evidence" value="ECO:0007669"/>
    <property type="project" value="InterPro"/>
</dbReference>
<dbReference type="GO" id="GO:0045892">
    <property type="term" value="P:negative regulation of DNA-templated transcription"/>
    <property type="evidence" value="ECO:0007669"/>
    <property type="project" value="UniProtKB-UniRule"/>
</dbReference>
<dbReference type="FunFam" id="1.10.1270.10:FF:000001">
    <property type="entry name" value="Trp operon repressor"/>
    <property type="match status" value="1"/>
</dbReference>
<dbReference type="Gene3D" id="1.10.1270.10">
    <property type="entry name" value="TrpR-like"/>
    <property type="match status" value="1"/>
</dbReference>
<dbReference type="HAMAP" id="MF_00475">
    <property type="entry name" value="Trp_repressor"/>
    <property type="match status" value="1"/>
</dbReference>
<dbReference type="InterPro" id="IPR000831">
    <property type="entry name" value="Trp_repress"/>
</dbReference>
<dbReference type="InterPro" id="IPR013335">
    <property type="entry name" value="Trp_repress_bac"/>
</dbReference>
<dbReference type="InterPro" id="IPR010921">
    <property type="entry name" value="Trp_repressor/repl_initiator"/>
</dbReference>
<dbReference type="InterPro" id="IPR038116">
    <property type="entry name" value="TrpR-like_sf"/>
</dbReference>
<dbReference type="NCBIfam" id="TIGR01321">
    <property type="entry name" value="TrpR"/>
    <property type="match status" value="1"/>
</dbReference>
<dbReference type="PANTHER" id="PTHR38025">
    <property type="entry name" value="TRP OPERON REPRESSOR"/>
    <property type="match status" value="1"/>
</dbReference>
<dbReference type="PANTHER" id="PTHR38025:SF1">
    <property type="entry name" value="TRP OPERON REPRESSOR"/>
    <property type="match status" value="1"/>
</dbReference>
<dbReference type="Pfam" id="PF01371">
    <property type="entry name" value="Trp_repressor"/>
    <property type="match status" value="1"/>
</dbReference>
<dbReference type="PIRSF" id="PIRSF003196">
    <property type="entry name" value="Trp_repressor"/>
    <property type="match status" value="1"/>
</dbReference>
<dbReference type="SUPFAM" id="SSF48295">
    <property type="entry name" value="TrpR-like"/>
    <property type="match status" value="1"/>
</dbReference>
<keyword id="KW-0963">Cytoplasm</keyword>
<keyword id="KW-0238">DNA-binding</keyword>
<keyword id="KW-0678">Repressor</keyword>
<keyword id="KW-0804">Transcription</keyword>
<keyword id="KW-0805">Transcription regulation</keyword>
<evidence type="ECO:0000255" key="1">
    <source>
        <dbReference type="HAMAP-Rule" id="MF_00475"/>
    </source>
</evidence>
<feature type="chain" id="PRO_1000197147" description="Trp operon repressor">
    <location>
        <begin position="1"/>
        <end position="108"/>
    </location>
</feature>
<feature type="DNA-binding region" evidence="1">
    <location>
        <begin position="68"/>
        <end position="91"/>
    </location>
</feature>
<reference key="1">
    <citation type="journal article" date="2009" name="PLoS Genet.">
        <title>Organised genome dynamics in the Escherichia coli species results in highly diverse adaptive paths.</title>
        <authorList>
            <person name="Touchon M."/>
            <person name="Hoede C."/>
            <person name="Tenaillon O."/>
            <person name="Barbe V."/>
            <person name="Baeriswyl S."/>
            <person name="Bidet P."/>
            <person name="Bingen E."/>
            <person name="Bonacorsi S."/>
            <person name="Bouchier C."/>
            <person name="Bouvet O."/>
            <person name="Calteau A."/>
            <person name="Chiapello H."/>
            <person name="Clermont O."/>
            <person name="Cruveiller S."/>
            <person name="Danchin A."/>
            <person name="Diard M."/>
            <person name="Dossat C."/>
            <person name="Karoui M.E."/>
            <person name="Frapy E."/>
            <person name="Garry L."/>
            <person name="Ghigo J.M."/>
            <person name="Gilles A.M."/>
            <person name="Johnson J."/>
            <person name="Le Bouguenec C."/>
            <person name="Lescat M."/>
            <person name="Mangenot S."/>
            <person name="Martinez-Jehanne V."/>
            <person name="Matic I."/>
            <person name="Nassif X."/>
            <person name="Oztas S."/>
            <person name="Petit M.A."/>
            <person name="Pichon C."/>
            <person name="Rouy Z."/>
            <person name="Ruf C.S."/>
            <person name="Schneider D."/>
            <person name="Tourret J."/>
            <person name="Vacherie B."/>
            <person name="Vallenet D."/>
            <person name="Medigue C."/>
            <person name="Rocha E.P.C."/>
            <person name="Denamur E."/>
        </authorList>
    </citation>
    <scope>NUCLEOTIDE SEQUENCE [LARGE SCALE GENOMIC DNA]</scope>
    <source>
        <strain>IAI39 / ExPEC</strain>
    </source>
</reference>
<name>TRPR_ECO7I</name>
<accession>B7NW74</accession>